<gene>
    <name evidence="1" type="primary">argS</name>
    <name type="ordered locus">Gbem_2283</name>
</gene>
<accession>B5EEF0</accession>
<evidence type="ECO:0000255" key="1">
    <source>
        <dbReference type="HAMAP-Rule" id="MF_00123"/>
    </source>
</evidence>
<protein>
    <recommendedName>
        <fullName evidence="1">Arginine--tRNA ligase</fullName>
        <ecNumber evidence="1">6.1.1.19</ecNumber>
    </recommendedName>
    <alternativeName>
        <fullName evidence="1">Arginyl-tRNA synthetase</fullName>
        <shortName evidence="1">ArgRS</shortName>
    </alternativeName>
</protein>
<sequence>MKEQLRACILKGIEGCFADGTLTSGEVPAINVEKPAHAEHGDFATNVAMQMAKQQRKAPRAVAEILVAKLAGASDLIESLEIAGPGFINFFIKDSAWRRTLTEIDRAGDAWGKSGIGRGKKVQVEFVSANPTGPLHIGHGRGAATGDAVASLLSAAGFDVQREYYINDAGNQMNTLGLSGLLRYKELLGEKIDFPETCYQGDYMKDIARDAVTKYGDRFLKVSQEDGVAFFSKMGGDLILAGIDQDLQDFGIRFDHWFSEQSLFDEGKVKSAIEEMQAKGLIYEQEGALWFRTTDYGDDKDRVVVRSNGVTTYFASDIAYHRDKFARGFDWVIDVWGADHHGYVPRLKSVVQGLGRDASDLGIILVQLVSLLRDGVPVAMSTRSGEFVTLKEVVDEVGRDAARFFFLMRRSDSQLDFDLELAKRQSNDNPVYYVQYAHARIKSIFDTARERGVEPRFDSVKLELLQTPEDLSLVKKLSVYPEILEGGAVNFEPHRITYYLQELAGEFHSFYNKSRVITPEEPELTQARLFLLHCVAITLKNALTVLGISAPERM</sequence>
<keyword id="KW-0030">Aminoacyl-tRNA synthetase</keyword>
<keyword id="KW-0067">ATP-binding</keyword>
<keyword id="KW-0963">Cytoplasm</keyword>
<keyword id="KW-0436">Ligase</keyword>
<keyword id="KW-0547">Nucleotide-binding</keyword>
<keyword id="KW-0648">Protein biosynthesis</keyword>
<keyword id="KW-1185">Reference proteome</keyword>
<proteinExistence type="inferred from homology"/>
<name>SYR_CITBB</name>
<feature type="chain" id="PRO_1000095367" description="Arginine--tRNA ligase">
    <location>
        <begin position="1"/>
        <end position="554"/>
    </location>
</feature>
<feature type="short sequence motif" description="'HIGH' region">
    <location>
        <begin position="129"/>
        <end position="139"/>
    </location>
</feature>
<comment type="catalytic activity">
    <reaction evidence="1">
        <text>tRNA(Arg) + L-arginine + ATP = L-arginyl-tRNA(Arg) + AMP + diphosphate</text>
        <dbReference type="Rhea" id="RHEA:20301"/>
        <dbReference type="Rhea" id="RHEA-COMP:9658"/>
        <dbReference type="Rhea" id="RHEA-COMP:9673"/>
        <dbReference type="ChEBI" id="CHEBI:30616"/>
        <dbReference type="ChEBI" id="CHEBI:32682"/>
        <dbReference type="ChEBI" id="CHEBI:33019"/>
        <dbReference type="ChEBI" id="CHEBI:78442"/>
        <dbReference type="ChEBI" id="CHEBI:78513"/>
        <dbReference type="ChEBI" id="CHEBI:456215"/>
        <dbReference type="EC" id="6.1.1.19"/>
    </reaction>
</comment>
<comment type="subunit">
    <text evidence="1">Monomer.</text>
</comment>
<comment type="subcellular location">
    <subcellularLocation>
        <location evidence="1">Cytoplasm</location>
    </subcellularLocation>
</comment>
<comment type="similarity">
    <text evidence="1">Belongs to the class-I aminoacyl-tRNA synthetase family.</text>
</comment>
<reference key="1">
    <citation type="submission" date="2008-07" db="EMBL/GenBank/DDBJ databases">
        <title>Complete sequence of Geobacter bemidjiensis BEM.</title>
        <authorList>
            <consortium name="US DOE Joint Genome Institute"/>
            <person name="Lucas S."/>
            <person name="Copeland A."/>
            <person name="Lapidus A."/>
            <person name="Glavina del Rio T."/>
            <person name="Dalin E."/>
            <person name="Tice H."/>
            <person name="Bruce D."/>
            <person name="Goodwin L."/>
            <person name="Pitluck S."/>
            <person name="Kiss H."/>
            <person name="Brettin T."/>
            <person name="Detter J.C."/>
            <person name="Han C."/>
            <person name="Kuske C.R."/>
            <person name="Schmutz J."/>
            <person name="Larimer F."/>
            <person name="Land M."/>
            <person name="Hauser L."/>
            <person name="Kyrpides N."/>
            <person name="Lykidis A."/>
            <person name="Lovley D."/>
            <person name="Richardson P."/>
        </authorList>
    </citation>
    <scope>NUCLEOTIDE SEQUENCE [LARGE SCALE GENOMIC DNA]</scope>
    <source>
        <strain>ATCC BAA-1014 / DSM 16622 / JCM 12645 / Bem</strain>
    </source>
</reference>
<dbReference type="EC" id="6.1.1.19" evidence="1"/>
<dbReference type="EMBL" id="CP001124">
    <property type="protein sequence ID" value="ACH39295.1"/>
    <property type="molecule type" value="Genomic_DNA"/>
</dbReference>
<dbReference type="RefSeq" id="WP_012530717.1">
    <property type="nucleotide sequence ID" value="NC_011146.1"/>
</dbReference>
<dbReference type="SMR" id="B5EEF0"/>
<dbReference type="STRING" id="404380.Gbem_2283"/>
<dbReference type="KEGG" id="gbm:Gbem_2283"/>
<dbReference type="eggNOG" id="COG0018">
    <property type="taxonomic scope" value="Bacteria"/>
</dbReference>
<dbReference type="HOGENOM" id="CLU_006406_0_1_7"/>
<dbReference type="OrthoDB" id="9803211at2"/>
<dbReference type="Proteomes" id="UP000008825">
    <property type="component" value="Chromosome"/>
</dbReference>
<dbReference type="GO" id="GO:0005737">
    <property type="term" value="C:cytoplasm"/>
    <property type="evidence" value="ECO:0007669"/>
    <property type="project" value="UniProtKB-SubCell"/>
</dbReference>
<dbReference type="GO" id="GO:0004814">
    <property type="term" value="F:arginine-tRNA ligase activity"/>
    <property type="evidence" value="ECO:0007669"/>
    <property type="project" value="UniProtKB-UniRule"/>
</dbReference>
<dbReference type="GO" id="GO:0005524">
    <property type="term" value="F:ATP binding"/>
    <property type="evidence" value="ECO:0007669"/>
    <property type="project" value="UniProtKB-UniRule"/>
</dbReference>
<dbReference type="GO" id="GO:0006420">
    <property type="term" value="P:arginyl-tRNA aminoacylation"/>
    <property type="evidence" value="ECO:0007669"/>
    <property type="project" value="UniProtKB-UniRule"/>
</dbReference>
<dbReference type="CDD" id="cd00671">
    <property type="entry name" value="ArgRS_core"/>
    <property type="match status" value="1"/>
</dbReference>
<dbReference type="FunFam" id="1.10.730.10:FF:000008">
    <property type="entry name" value="Arginine--tRNA ligase"/>
    <property type="match status" value="1"/>
</dbReference>
<dbReference type="FunFam" id="3.30.1360.70:FF:000003">
    <property type="entry name" value="Arginine--tRNA ligase"/>
    <property type="match status" value="1"/>
</dbReference>
<dbReference type="FunFam" id="3.40.50.620:FF:000062">
    <property type="entry name" value="Arginine--tRNA ligase"/>
    <property type="match status" value="1"/>
</dbReference>
<dbReference type="Gene3D" id="3.30.1360.70">
    <property type="entry name" value="Arginyl tRNA synthetase N-terminal domain"/>
    <property type="match status" value="1"/>
</dbReference>
<dbReference type="Gene3D" id="3.40.50.620">
    <property type="entry name" value="HUPs"/>
    <property type="match status" value="1"/>
</dbReference>
<dbReference type="Gene3D" id="1.10.730.10">
    <property type="entry name" value="Isoleucyl-tRNA Synthetase, Domain 1"/>
    <property type="match status" value="1"/>
</dbReference>
<dbReference type="HAMAP" id="MF_00123">
    <property type="entry name" value="Arg_tRNA_synth"/>
    <property type="match status" value="1"/>
</dbReference>
<dbReference type="InterPro" id="IPR001412">
    <property type="entry name" value="aa-tRNA-synth_I_CS"/>
</dbReference>
<dbReference type="InterPro" id="IPR001278">
    <property type="entry name" value="Arg-tRNA-ligase"/>
</dbReference>
<dbReference type="InterPro" id="IPR005148">
    <property type="entry name" value="Arg-tRNA-synth_N"/>
</dbReference>
<dbReference type="InterPro" id="IPR036695">
    <property type="entry name" value="Arg-tRNA-synth_N_sf"/>
</dbReference>
<dbReference type="InterPro" id="IPR035684">
    <property type="entry name" value="ArgRS_core"/>
</dbReference>
<dbReference type="InterPro" id="IPR008909">
    <property type="entry name" value="DALR_anticod-bd"/>
</dbReference>
<dbReference type="InterPro" id="IPR014729">
    <property type="entry name" value="Rossmann-like_a/b/a_fold"/>
</dbReference>
<dbReference type="InterPro" id="IPR009080">
    <property type="entry name" value="tRNAsynth_Ia_anticodon-bd"/>
</dbReference>
<dbReference type="NCBIfam" id="TIGR00456">
    <property type="entry name" value="argS"/>
    <property type="match status" value="1"/>
</dbReference>
<dbReference type="PANTHER" id="PTHR11956:SF5">
    <property type="entry name" value="ARGININE--TRNA LIGASE, CYTOPLASMIC"/>
    <property type="match status" value="1"/>
</dbReference>
<dbReference type="PANTHER" id="PTHR11956">
    <property type="entry name" value="ARGINYL-TRNA SYNTHETASE"/>
    <property type="match status" value="1"/>
</dbReference>
<dbReference type="Pfam" id="PF03485">
    <property type="entry name" value="Arg_tRNA_synt_N"/>
    <property type="match status" value="1"/>
</dbReference>
<dbReference type="Pfam" id="PF05746">
    <property type="entry name" value="DALR_1"/>
    <property type="match status" value="1"/>
</dbReference>
<dbReference type="Pfam" id="PF00750">
    <property type="entry name" value="tRNA-synt_1d"/>
    <property type="match status" value="1"/>
</dbReference>
<dbReference type="PRINTS" id="PR01038">
    <property type="entry name" value="TRNASYNTHARG"/>
</dbReference>
<dbReference type="SMART" id="SM01016">
    <property type="entry name" value="Arg_tRNA_synt_N"/>
    <property type="match status" value="1"/>
</dbReference>
<dbReference type="SMART" id="SM00836">
    <property type="entry name" value="DALR_1"/>
    <property type="match status" value="1"/>
</dbReference>
<dbReference type="SUPFAM" id="SSF47323">
    <property type="entry name" value="Anticodon-binding domain of a subclass of class I aminoacyl-tRNA synthetases"/>
    <property type="match status" value="1"/>
</dbReference>
<dbReference type="SUPFAM" id="SSF55190">
    <property type="entry name" value="Arginyl-tRNA synthetase (ArgRS), N-terminal 'additional' domain"/>
    <property type="match status" value="1"/>
</dbReference>
<dbReference type="SUPFAM" id="SSF52374">
    <property type="entry name" value="Nucleotidylyl transferase"/>
    <property type="match status" value="1"/>
</dbReference>
<dbReference type="PROSITE" id="PS00178">
    <property type="entry name" value="AA_TRNA_LIGASE_I"/>
    <property type="match status" value="1"/>
</dbReference>
<organism>
    <name type="scientific">Citrifermentans bemidjiense (strain ATCC BAA-1014 / DSM 16622 / JCM 12645 / Bem)</name>
    <name type="common">Geobacter bemidjiensis</name>
    <dbReference type="NCBI Taxonomy" id="404380"/>
    <lineage>
        <taxon>Bacteria</taxon>
        <taxon>Pseudomonadati</taxon>
        <taxon>Thermodesulfobacteriota</taxon>
        <taxon>Desulfuromonadia</taxon>
        <taxon>Geobacterales</taxon>
        <taxon>Geobacteraceae</taxon>
        <taxon>Citrifermentans</taxon>
    </lineage>
</organism>